<proteinExistence type="inferred from homology"/>
<name>PXPA_BACCZ</name>
<organism>
    <name type="scientific">Bacillus cereus (strain ZK / E33L)</name>
    <dbReference type="NCBI Taxonomy" id="288681"/>
    <lineage>
        <taxon>Bacteria</taxon>
        <taxon>Bacillati</taxon>
        <taxon>Bacillota</taxon>
        <taxon>Bacilli</taxon>
        <taxon>Bacillales</taxon>
        <taxon>Bacillaceae</taxon>
        <taxon>Bacillus</taxon>
        <taxon>Bacillus cereus group</taxon>
    </lineage>
</organism>
<comment type="function">
    <text evidence="1">Catalyzes the cleavage of 5-oxoproline to form L-glutamate coupled to the hydrolysis of ATP to ADP and inorganic phosphate.</text>
</comment>
<comment type="catalytic activity">
    <reaction evidence="1">
        <text>5-oxo-L-proline + ATP + 2 H2O = L-glutamate + ADP + phosphate + H(+)</text>
        <dbReference type="Rhea" id="RHEA:10348"/>
        <dbReference type="ChEBI" id="CHEBI:15377"/>
        <dbReference type="ChEBI" id="CHEBI:15378"/>
        <dbReference type="ChEBI" id="CHEBI:29985"/>
        <dbReference type="ChEBI" id="CHEBI:30616"/>
        <dbReference type="ChEBI" id="CHEBI:43474"/>
        <dbReference type="ChEBI" id="CHEBI:58402"/>
        <dbReference type="ChEBI" id="CHEBI:456216"/>
        <dbReference type="EC" id="3.5.2.9"/>
    </reaction>
</comment>
<comment type="subunit">
    <text evidence="1">Forms a complex composed of PxpA, PxpB and PxpC.</text>
</comment>
<comment type="similarity">
    <text evidence="1">Belongs to the LamB/PxpA family.</text>
</comment>
<reference key="1">
    <citation type="journal article" date="2006" name="J. Bacteriol.">
        <title>Pathogenomic sequence analysis of Bacillus cereus and Bacillus thuringiensis isolates closely related to Bacillus anthracis.</title>
        <authorList>
            <person name="Han C.S."/>
            <person name="Xie G."/>
            <person name="Challacombe J.F."/>
            <person name="Altherr M.R."/>
            <person name="Bhotika S.S."/>
            <person name="Bruce D."/>
            <person name="Campbell C.S."/>
            <person name="Campbell M.L."/>
            <person name="Chen J."/>
            <person name="Chertkov O."/>
            <person name="Cleland C."/>
            <person name="Dimitrijevic M."/>
            <person name="Doggett N.A."/>
            <person name="Fawcett J.J."/>
            <person name="Glavina T."/>
            <person name="Goodwin L.A."/>
            <person name="Hill K.K."/>
            <person name="Hitchcock P."/>
            <person name="Jackson P.J."/>
            <person name="Keim P."/>
            <person name="Kewalramani A.R."/>
            <person name="Longmire J."/>
            <person name="Lucas S."/>
            <person name="Malfatti S."/>
            <person name="McMurry K."/>
            <person name="Meincke L.J."/>
            <person name="Misra M."/>
            <person name="Moseman B.L."/>
            <person name="Mundt M."/>
            <person name="Munk A.C."/>
            <person name="Okinaka R.T."/>
            <person name="Parson-Quintana B."/>
            <person name="Reilly L.P."/>
            <person name="Richardson P."/>
            <person name="Robinson D.L."/>
            <person name="Rubin E."/>
            <person name="Saunders E."/>
            <person name="Tapia R."/>
            <person name="Tesmer J.G."/>
            <person name="Thayer N."/>
            <person name="Thompson L.S."/>
            <person name="Tice H."/>
            <person name="Ticknor L.O."/>
            <person name="Wills P.L."/>
            <person name="Brettin T.S."/>
            <person name="Gilna P."/>
        </authorList>
    </citation>
    <scope>NUCLEOTIDE SEQUENCE [LARGE SCALE GENOMIC DNA]</scope>
    <source>
        <strain>ZK / E33L</strain>
    </source>
</reference>
<protein>
    <recommendedName>
        <fullName evidence="1">5-oxoprolinase subunit A</fullName>
        <shortName evidence="1">5-OPase subunit A</shortName>
        <ecNumber evidence="1">3.5.2.9</ecNumber>
    </recommendedName>
    <alternativeName>
        <fullName evidence="1">5-oxoprolinase (ATP-hydrolyzing) subunit A</fullName>
    </alternativeName>
</protein>
<sequence length="253" mass="27776">MTTIDLNCDLGESFGAYKMGNDDEILPFVSSINVACGFHAGDPSVMRQTVEKAMQHNVAIGAHPGFPDLIGFGRRNMNVSASEVYDYVLYQIGALDTFVKAAGGKMHHVKPHGALYNMAATNPEIADAIAKAIYHSNPSLLFYGLANSEAFIQAAEKYNITLVQEAFADRTYKQDGTLTSRTEENALIKNEEEAIKQVLQMVKEGYVNSVNGEKVAVQAQTICLHGDGEKAVQFARRIYRTFENNEISICTPK</sequence>
<feature type="chain" id="PRO_0000184985" description="5-oxoprolinase subunit A">
    <location>
        <begin position="1"/>
        <end position="253"/>
    </location>
</feature>
<accession>Q639M2</accession>
<evidence type="ECO:0000255" key="1">
    <source>
        <dbReference type="HAMAP-Rule" id="MF_00691"/>
    </source>
</evidence>
<keyword id="KW-0067">ATP-binding</keyword>
<keyword id="KW-0378">Hydrolase</keyword>
<keyword id="KW-0547">Nucleotide-binding</keyword>
<gene>
    <name evidence="1" type="primary">pxpA</name>
    <name type="ordered locus">BCE33L2808</name>
</gene>
<dbReference type="EC" id="3.5.2.9" evidence="1"/>
<dbReference type="EMBL" id="CP000001">
    <property type="protein sequence ID" value="AAU17453.1"/>
    <property type="molecule type" value="Genomic_DNA"/>
</dbReference>
<dbReference type="RefSeq" id="WP_000207344.1">
    <property type="nucleotide sequence ID" value="NC_006274.1"/>
</dbReference>
<dbReference type="SMR" id="Q639M2"/>
<dbReference type="KEGG" id="bcz:BCE33L2808"/>
<dbReference type="PATRIC" id="fig|288681.22.peg.2650"/>
<dbReference type="Proteomes" id="UP000002612">
    <property type="component" value="Chromosome"/>
</dbReference>
<dbReference type="GO" id="GO:0017168">
    <property type="term" value="F:5-oxoprolinase (ATP-hydrolyzing) activity"/>
    <property type="evidence" value="ECO:0007669"/>
    <property type="project" value="UniProtKB-UniRule"/>
</dbReference>
<dbReference type="GO" id="GO:0005524">
    <property type="term" value="F:ATP binding"/>
    <property type="evidence" value="ECO:0007669"/>
    <property type="project" value="UniProtKB-UniRule"/>
</dbReference>
<dbReference type="GO" id="GO:0005975">
    <property type="term" value="P:carbohydrate metabolic process"/>
    <property type="evidence" value="ECO:0007669"/>
    <property type="project" value="InterPro"/>
</dbReference>
<dbReference type="CDD" id="cd10787">
    <property type="entry name" value="LamB_YcsF_like"/>
    <property type="match status" value="1"/>
</dbReference>
<dbReference type="Gene3D" id="3.20.20.370">
    <property type="entry name" value="Glycoside hydrolase/deacetylase"/>
    <property type="match status" value="1"/>
</dbReference>
<dbReference type="HAMAP" id="MF_00691">
    <property type="entry name" value="PxpA"/>
    <property type="match status" value="1"/>
</dbReference>
<dbReference type="InterPro" id="IPR011330">
    <property type="entry name" value="Glyco_hydro/deAcase_b/a-brl"/>
</dbReference>
<dbReference type="InterPro" id="IPR005501">
    <property type="entry name" value="LamB/YcsF/PxpA-like"/>
</dbReference>
<dbReference type="NCBIfam" id="NF003813">
    <property type="entry name" value="PRK05406.1-2"/>
    <property type="match status" value="1"/>
</dbReference>
<dbReference type="NCBIfam" id="NF003814">
    <property type="entry name" value="PRK05406.1-3"/>
    <property type="match status" value="1"/>
</dbReference>
<dbReference type="NCBIfam" id="NF003816">
    <property type="entry name" value="PRK05406.1-5"/>
    <property type="match status" value="1"/>
</dbReference>
<dbReference type="PANTHER" id="PTHR30292:SF0">
    <property type="entry name" value="5-OXOPROLINASE SUBUNIT A"/>
    <property type="match status" value="1"/>
</dbReference>
<dbReference type="PANTHER" id="PTHR30292">
    <property type="entry name" value="UNCHARACTERIZED PROTEIN YBGL-RELATED"/>
    <property type="match status" value="1"/>
</dbReference>
<dbReference type="Pfam" id="PF03746">
    <property type="entry name" value="LamB_YcsF"/>
    <property type="match status" value="1"/>
</dbReference>
<dbReference type="SUPFAM" id="SSF88713">
    <property type="entry name" value="Glycoside hydrolase/deacetylase"/>
    <property type="match status" value="1"/>
</dbReference>